<keyword id="KW-0068">Autocatalytic cleavage</keyword>
<keyword id="KW-0227">DNA damage</keyword>
<keyword id="KW-0234">DNA repair</keyword>
<keyword id="KW-0235">DNA replication</keyword>
<keyword id="KW-0238">DNA-binding</keyword>
<keyword id="KW-0378">Hydrolase</keyword>
<keyword id="KW-1185">Reference proteome</keyword>
<keyword id="KW-0678">Repressor</keyword>
<keyword id="KW-0742">SOS response</keyword>
<keyword id="KW-0804">Transcription</keyword>
<keyword id="KW-0805">Transcription regulation</keyword>
<name>LEXA_GRABC</name>
<accession>Q0BTY8</accession>
<organism>
    <name type="scientific">Granulibacter bethesdensis (strain ATCC BAA-1260 / CGDNIH1)</name>
    <dbReference type="NCBI Taxonomy" id="391165"/>
    <lineage>
        <taxon>Bacteria</taxon>
        <taxon>Pseudomonadati</taxon>
        <taxon>Pseudomonadota</taxon>
        <taxon>Alphaproteobacteria</taxon>
        <taxon>Acetobacterales</taxon>
        <taxon>Acetobacteraceae</taxon>
        <taxon>Granulibacter</taxon>
    </lineage>
</organism>
<gene>
    <name evidence="1" type="primary">lexA</name>
    <name type="ordered locus">GbCGDNIH1_0816</name>
</gene>
<protein>
    <recommendedName>
        <fullName evidence="1">LexA repressor</fullName>
        <ecNumber evidence="1">3.4.21.88</ecNumber>
    </recommendedName>
</protein>
<sequence>MLTRKQYELLLLIDGHLRKTGFSPSFEEMKAALNLKSKSGIHRLISALEERGFLRRRHHRARALEVIRMPEAASMPVPKTAPSAPSFASPPAFTPNVIQGSFSSRIAGVRAAQDASAVQLPLYGRIAAGMPIEALRDTSAYLSVPIDMLGNGEHYALEVAGDSMIDAGIFDGDTVIIQQSDLAENGQIVVALIDDTEVTLKRLRRRGKSVALEPANERHETRIFPADRVRVQGRLIGLLRRY</sequence>
<feature type="chain" id="PRO_1000001288" description="LexA repressor">
    <location>
        <begin position="1"/>
        <end position="242"/>
    </location>
</feature>
<feature type="DNA-binding region" description="H-T-H motif" evidence="1">
    <location>
        <begin position="26"/>
        <end position="46"/>
    </location>
</feature>
<feature type="active site" description="For autocatalytic cleavage activity" evidence="1">
    <location>
        <position position="163"/>
    </location>
</feature>
<feature type="active site" description="For autocatalytic cleavage activity" evidence="1">
    <location>
        <position position="201"/>
    </location>
</feature>
<feature type="site" description="Cleavage; by autolysis" evidence="1">
    <location>
        <begin position="128"/>
        <end position="129"/>
    </location>
</feature>
<evidence type="ECO:0000255" key="1">
    <source>
        <dbReference type="HAMAP-Rule" id="MF_00015"/>
    </source>
</evidence>
<dbReference type="EC" id="3.4.21.88" evidence="1"/>
<dbReference type="EMBL" id="CP000394">
    <property type="protein sequence ID" value="ABI61714.1"/>
    <property type="molecule type" value="Genomic_DNA"/>
</dbReference>
<dbReference type="RefSeq" id="WP_011631523.1">
    <property type="nucleotide sequence ID" value="NC_008343.2"/>
</dbReference>
<dbReference type="SMR" id="Q0BTY8"/>
<dbReference type="STRING" id="391165.GbCGDNIH1_0816"/>
<dbReference type="MEROPS" id="S24.001"/>
<dbReference type="KEGG" id="gbe:GbCGDNIH1_0816"/>
<dbReference type="eggNOG" id="COG1974">
    <property type="taxonomic scope" value="Bacteria"/>
</dbReference>
<dbReference type="HOGENOM" id="CLU_066192_45_2_5"/>
<dbReference type="OrthoDB" id="9802364at2"/>
<dbReference type="Proteomes" id="UP000001963">
    <property type="component" value="Chromosome"/>
</dbReference>
<dbReference type="GO" id="GO:0003677">
    <property type="term" value="F:DNA binding"/>
    <property type="evidence" value="ECO:0007669"/>
    <property type="project" value="UniProtKB-UniRule"/>
</dbReference>
<dbReference type="GO" id="GO:0004252">
    <property type="term" value="F:serine-type endopeptidase activity"/>
    <property type="evidence" value="ECO:0007669"/>
    <property type="project" value="UniProtKB-UniRule"/>
</dbReference>
<dbReference type="GO" id="GO:0006281">
    <property type="term" value="P:DNA repair"/>
    <property type="evidence" value="ECO:0007669"/>
    <property type="project" value="UniProtKB-UniRule"/>
</dbReference>
<dbReference type="GO" id="GO:0006260">
    <property type="term" value="P:DNA replication"/>
    <property type="evidence" value="ECO:0007669"/>
    <property type="project" value="UniProtKB-UniRule"/>
</dbReference>
<dbReference type="GO" id="GO:0045892">
    <property type="term" value="P:negative regulation of DNA-templated transcription"/>
    <property type="evidence" value="ECO:0007669"/>
    <property type="project" value="UniProtKB-UniRule"/>
</dbReference>
<dbReference type="GO" id="GO:0006508">
    <property type="term" value="P:proteolysis"/>
    <property type="evidence" value="ECO:0007669"/>
    <property type="project" value="InterPro"/>
</dbReference>
<dbReference type="GO" id="GO:0009432">
    <property type="term" value="P:SOS response"/>
    <property type="evidence" value="ECO:0007669"/>
    <property type="project" value="UniProtKB-UniRule"/>
</dbReference>
<dbReference type="CDD" id="cd06529">
    <property type="entry name" value="S24_LexA-like"/>
    <property type="match status" value="1"/>
</dbReference>
<dbReference type="FunFam" id="2.10.109.10:FF:000001">
    <property type="entry name" value="LexA repressor"/>
    <property type="match status" value="1"/>
</dbReference>
<dbReference type="Gene3D" id="2.10.109.10">
    <property type="entry name" value="Umud Fragment, subunit A"/>
    <property type="match status" value="1"/>
</dbReference>
<dbReference type="Gene3D" id="1.10.10.10">
    <property type="entry name" value="Winged helix-like DNA-binding domain superfamily/Winged helix DNA-binding domain"/>
    <property type="match status" value="1"/>
</dbReference>
<dbReference type="HAMAP" id="MF_00015">
    <property type="entry name" value="LexA"/>
    <property type="match status" value="1"/>
</dbReference>
<dbReference type="InterPro" id="IPR006200">
    <property type="entry name" value="LexA"/>
</dbReference>
<dbReference type="InterPro" id="IPR039418">
    <property type="entry name" value="LexA-like"/>
</dbReference>
<dbReference type="InterPro" id="IPR036286">
    <property type="entry name" value="LexA/Signal_pep-like_sf"/>
</dbReference>
<dbReference type="InterPro" id="IPR006199">
    <property type="entry name" value="LexA_DNA-bd_dom"/>
</dbReference>
<dbReference type="InterPro" id="IPR050077">
    <property type="entry name" value="LexA_repressor"/>
</dbReference>
<dbReference type="InterPro" id="IPR006197">
    <property type="entry name" value="Peptidase_S24_LexA"/>
</dbReference>
<dbReference type="InterPro" id="IPR015927">
    <property type="entry name" value="Peptidase_S24_S26A/B/C"/>
</dbReference>
<dbReference type="InterPro" id="IPR036388">
    <property type="entry name" value="WH-like_DNA-bd_sf"/>
</dbReference>
<dbReference type="InterPro" id="IPR036390">
    <property type="entry name" value="WH_DNA-bd_sf"/>
</dbReference>
<dbReference type="NCBIfam" id="TIGR00498">
    <property type="entry name" value="lexA"/>
    <property type="match status" value="1"/>
</dbReference>
<dbReference type="PANTHER" id="PTHR33516">
    <property type="entry name" value="LEXA REPRESSOR"/>
    <property type="match status" value="1"/>
</dbReference>
<dbReference type="PANTHER" id="PTHR33516:SF2">
    <property type="entry name" value="LEXA REPRESSOR-RELATED"/>
    <property type="match status" value="1"/>
</dbReference>
<dbReference type="Pfam" id="PF01726">
    <property type="entry name" value="LexA_DNA_bind"/>
    <property type="match status" value="1"/>
</dbReference>
<dbReference type="Pfam" id="PF00717">
    <property type="entry name" value="Peptidase_S24"/>
    <property type="match status" value="1"/>
</dbReference>
<dbReference type="PRINTS" id="PR00726">
    <property type="entry name" value="LEXASERPTASE"/>
</dbReference>
<dbReference type="SUPFAM" id="SSF51306">
    <property type="entry name" value="LexA/Signal peptidase"/>
    <property type="match status" value="1"/>
</dbReference>
<dbReference type="SUPFAM" id="SSF46785">
    <property type="entry name" value="Winged helix' DNA-binding domain"/>
    <property type="match status" value="1"/>
</dbReference>
<comment type="function">
    <text evidence="1">Represses a number of genes involved in the response to DNA damage (SOS response), including recA and lexA. In the presence of single-stranded DNA, RecA interacts with LexA causing an autocatalytic cleavage which disrupts the DNA-binding part of LexA, leading to derepression of the SOS regulon and eventually DNA repair.</text>
</comment>
<comment type="catalytic activity">
    <reaction evidence="1">
        <text>Hydrolysis of Ala-|-Gly bond in repressor LexA.</text>
        <dbReference type="EC" id="3.4.21.88"/>
    </reaction>
</comment>
<comment type="subunit">
    <text evidence="1">Homodimer.</text>
</comment>
<comment type="similarity">
    <text evidence="1">Belongs to the peptidase S24 family.</text>
</comment>
<reference key="1">
    <citation type="journal article" date="2007" name="J. Bacteriol.">
        <title>Genome sequence analysis of the emerging human pathogenic acetic acid bacterium Granulibacter bethesdensis.</title>
        <authorList>
            <person name="Greenberg D.E."/>
            <person name="Porcella S.F."/>
            <person name="Zelazny A.M."/>
            <person name="Virtaneva K."/>
            <person name="Sturdevant D.E."/>
            <person name="Kupko J.J. III"/>
            <person name="Barbian K.D."/>
            <person name="Babar A."/>
            <person name="Dorward D.W."/>
            <person name="Holland S.M."/>
        </authorList>
    </citation>
    <scope>NUCLEOTIDE SEQUENCE [LARGE SCALE GENOMIC DNA]</scope>
    <source>
        <strain>ATCC BAA-1260 / CGDNIH1</strain>
    </source>
</reference>
<proteinExistence type="inferred from homology"/>